<reference key="1">
    <citation type="journal article" date="2007" name="Genome Res.">
        <title>Reductive evolution and niche adaptation inferred from the genome of Mycobacterium ulcerans, the causative agent of Buruli ulcer.</title>
        <authorList>
            <person name="Stinear T.P."/>
            <person name="Seemann T."/>
            <person name="Pidot S."/>
            <person name="Frigui W."/>
            <person name="Reysset G."/>
            <person name="Garnier T."/>
            <person name="Meurice G."/>
            <person name="Simon D."/>
            <person name="Bouchier C."/>
            <person name="Ma L."/>
            <person name="Tichit M."/>
            <person name="Porter J.L."/>
            <person name="Ryan J."/>
            <person name="Johnson P.D.R."/>
            <person name="Davies J.K."/>
            <person name="Jenkin G.A."/>
            <person name="Small P.L.C."/>
            <person name="Jones L.M."/>
            <person name="Tekaia F."/>
            <person name="Laval F."/>
            <person name="Daffe M."/>
            <person name="Parkhill J."/>
            <person name="Cole S.T."/>
        </authorList>
    </citation>
    <scope>NUCLEOTIDE SEQUENCE [LARGE SCALE GENOMIC DNA]</scope>
    <source>
        <strain>Agy99</strain>
    </source>
</reference>
<evidence type="ECO:0000255" key="1">
    <source>
        <dbReference type="HAMAP-Rule" id="MF_00632"/>
    </source>
</evidence>
<keyword id="KW-0547">Nucleotide-binding</keyword>
<protein>
    <recommendedName>
        <fullName evidence="1">Nucleotide-binding protein MUL_0671</fullName>
    </recommendedName>
</protein>
<feature type="chain" id="PRO_1000051743" description="Nucleotide-binding protein MUL_0671">
    <location>
        <begin position="1"/>
        <end position="163"/>
    </location>
</feature>
<comment type="function">
    <text evidence="1">Nucleotide-binding protein.</text>
</comment>
<comment type="similarity">
    <text evidence="1">Belongs to the YajQ family.</text>
</comment>
<organism>
    <name type="scientific">Mycobacterium ulcerans (strain Agy99)</name>
    <dbReference type="NCBI Taxonomy" id="362242"/>
    <lineage>
        <taxon>Bacteria</taxon>
        <taxon>Bacillati</taxon>
        <taxon>Actinomycetota</taxon>
        <taxon>Actinomycetes</taxon>
        <taxon>Mycobacteriales</taxon>
        <taxon>Mycobacteriaceae</taxon>
        <taxon>Mycobacterium</taxon>
        <taxon>Mycobacterium ulcerans group</taxon>
    </lineage>
</organism>
<accession>A0PLW6</accession>
<name>Y671_MYCUA</name>
<sequence length="163" mass="18108">MADSSFDIVSKVDHQEVDNALNQAAKELATRFDFRGTDTKIAWKGDEAVELTSSTEERVKAAVDVFKEKLIRRDISMKAFDAGEPQASGKTYKVTGDIKQGISGDDAKKITKLVRDEGPKGVKTQIQGEEIRVTSKKRDDLQTVIAMLKQADLDVALQFVNYR</sequence>
<dbReference type="EMBL" id="CP000325">
    <property type="protein sequence ID" value="ABL03335.1"/>
    <property type="molecule type" value="Genomic_DNA"/>
</dbReference>
<dbReference type="RefSeq" id="WP_011738960.1">
    <property type="nucleotide sequence ID" value="NC_008611.1"/>
</dbReference>
<dbReference type="SMR" id="A0PLW6"/>
<dbReference type="KEGG" id="mul:MUL_0671"/>
<dbReference type="eggNOG" id="COG1666">
    <property type="taxonomic scope" value="Bacteria"/>
</dbReference>
<dbReference type="HOGENOM" id="CLU_099839_0_0_11"/>
<dbReference type="Proteomes" id="UP000000765">
    <property type="component" value="Chromosome"/>
</dbReference>
<dbReference type="GO" id="GO:0005829">
    <property type="term" value="C:cytosol"/>
    <property type="evidence" value="ECO:0007669"/>
    <property type="project" value="TreeGrafter"/>
</dbReference>
<dbReference type="GO" id="GO:0000166">
    <property type="term" value="F:nucleotide binding"/>
    <property type="evidence" value="ECO:0007669"/>
    <property type="project" value="TreeGrafter"/>
</dbReference>
<dbReference type="CDD" id="cd11740">
    <property type="entry name" value="YajQ_like"/>
    <property type="match status" value="1"/>
</dbReference>
<dbReference type="FunFam" id="3.30.70.860:FF:000004">
    <property type="entry name" value="UPF0234 protein AWC22_11905"/>
    <property type="match status" value="1"/>
</dbReference>
<dbReference type="FunFam" id="3.30.70.990:FF:000003">
    <property type="entry name" value="UPF0234 protein MIP_06774"/>
    <property type="match status" value="1"/>
</dbReference>
<dbReference type="Gene3D" id="3.30.70.860">
    <property type="match status" value="1"/>
</dbReference>
<dbReference type="Gene3D" id="3.30.70.990">
    <property type="entry name" value="YajQ-like, domain 2"/>
    <property type="match status" value="1"/>
</dbReference>
<dbReference type="HAMAP" id="MF_00632">
    <property type="entry name" value="YajQ"/>
    <property type="match status" value="1"/>
</dbReference>
<dbReference type="InterPro" id="IPR007551">
    <property type="entry name" value="DUF520"/>
</dbReference>
<dbReference type="InterPro" id="IPR035571">
    <property type="entry name" value="UPF0234-like_C"/>
</dbReference>
<dbReference type="InterPro" id="IPR035570">
    <property type="entry name" value="UPF0234_N"/>
</dbReference>
<dbReference type="InterPro" id="IPR036183">
    <property type="entry name" value="YajQ-like_sf"/>
</dbReference>
<dbReference type="NCBIfam" id="NF003819">
    <property type="entry name" value="PRK05412.1"/>
    <property type="match status" value="1"/>
</dbReference>
<dbReference type="PANTHER" id="PTHR30476">
    <property type="entry name" value="UPF0234 PROTEIN YAJQ"/>
    <property type="match status" value="1"/>
</dbReference>
<dbReference type="PANTHER" id="PTHR30476:SF0">
    <property type="entry name" value="UPF0234 PROTEIN YAJQ"/>
    <property type="match status" value="1"/>
</dbReference>
<dbReference type="Pfam" id="PF04461">
    <property type="entry name" value="DUF520"/>
    <property type="match status" value="1"/>
</dbReference>
<dbReference type="SUPFAM" id="SSF89963">
    <property type="entry name" value="YajQ-like"/>
    <property type="match status" value="2"/>
</dbReference>
<gene>
    <name type="ordered locus">MUL_0671</name>
</gene>
<proteinExistence type="inferred from homology"/>